<comment type="function">
    <text evidence="1">Catalyzes the ATP- as well as the pyrophosphate-dependent phosphorylation of a specific serine residue in HPr, a phosphocarrier protein of the phosphoenolpyruvate-dependent sugar phosphotransferase system (PTS). HprK/P also catalyzes the pyrophosphate-producing, inorganic phosphate-dependent dephosphorylation (phosphorolysis) of seryl-phosphorylated HPr (P-Ser-HPr). The two antagonistic activities of HprK/P are regulated by several intracellular metabolites, which change their concentration in response to the absence or presence of rapidly metabolisable carbon sources (glucose, fructose, etc.) in the growth medium. Therefore, by controlling the phosphorylation state of HPr, HPrK/P is a sensor enzyme that plays a major role in the regulation of carbon metabolism and sugar transport: it mediates carbon catabolite repression (CCR), and regulates PTS-catalyzed carbohydrate uptake and inducer exclusion.</text>
</comment>
<comment type="catalytic activity">
    <reaction evidence="1">
        <text>[HPr protein]-L-serine + ATP = [HPr protein]-O-phospho-L-serine + ADP + H(+)</text>
        <dbReference type="Rhea" id="RHEA:46600"/>
        <dbReference type="Rhea" id="RHEA-COMP:11602"/>
        <dbReference type="Rhea" id="RHEA-COMP:11603"/>
        <dbReference type="ChEBI" id="CHEBI:15378"/>
        <dbReference type="ChEBI" id="CHEBI:29999"/>
        <dbReference type="ChEBI" id="CHEBI:30616"/>
        <dbReference type="ChEBI" id="CHEBI:83421"/>
        <dbReference type="ChEBI" id="CHEBI:456216"/>
    </reaction>
</comment>
<comment type="catalytic activity">
    <reaction evidence="1">
        <text>[HPr protein]-O-phospho-L-serine + phosphate + H(+) = [HPr protein]-L-serine + diphosphate</text>
        <dbReference type="Rhea" id="RHEA:46604"/>
        <dbReference type="Rhea" id="RHEA-COMP:11602"/>
        <dbReference type="Rhea" id="RHEA-COMP:11603"/>
        <dbReference type="ChEBI" id="CHEBI:15378"/>
        <dbReference type="ChEBI" id="CHEBI:29999"/>
        <dbReference type="ChEBI" id="CHEBI:33019"/>
        <dbReference type="ChEBI" id="CHEBI:43474"/>
        <dbReference type="ChEBI" id="CHEBI:83421"/>
    </reaction>
</comment>
<comment type="cofactor">
    <cofactor evidence="1">
        <name>Mg(2+)</name>
        <dbReference type="ChEBI" id="CHEBI:18420"/>
    </cofactor>
</comment>
<comment type="subunit">
    <text evidence="1">Homohexamer.</text>
</comment>
<comment type="domain">
    <text evidence="1">The Walker A ATP-binding motif also binds Pi and PPi.</text>
</comment>
<comment type="miscellaneous">
    <text evidence="1">Both phosphorylation and phosphorolysis are carried out by the same active site and suggest a common mechanism for both reactions.</text>
</comment>
<comment type="similarity">
    <text evidence="1">Belongs to the HPrK/P family.</text>
</comment>
<organism>
    <name type="scientific">Streptococcus pyogenes serotype M5 (strain Manfredo)</name>
    <dbReference type="NCBI Taxonomy" id="160491"/>
    <lineage>
        <taxon>Bacteria</taxon>
        <taxon>Bacillati</taxon>
        <taxon>Bacillota</taxon>
        <taxon>Bacilli</taxon>
        <taxon>Lactobacillales</taxon>
        <taxon>Streptococcaceae</taxon>
        <taxon>Streptococcus</taxon>
    </lineage>
</organism>
<gene>
    <name evidence="1" type="primary">hprK</name>
    <name type="ordered locus">SpyM51377</name>
</gene>
<feature type="chain" id="PRO_1000067176" description="HPr kinase/phosphorylase">
    <location>
        <begin position="1"/>
        <end position="310"/>
    </location>
</feature>
<feature type="region of interest" description="Important for the catalytic mechanism of both phosphorylation and dephosphorylation" evidence="1">
    <location>
        <begin position="201"/>
        <end position="210"/>
    </location>
</feature>
<feature type="region of interest" description="Important for the catalytic mechanism of dephosphorylation" evidence="1">
    <location>
        <begin position="264"/>
        <end position="269"/>
    </location>
</feature>
<feature type="active site" evidence="1">
    <location>
        <position position="138"/>
    </location>
</feature>
<feature type="active site" evidence="1">
    <location>
        <position position="159"/>
    </location>
</feature>
<feature type="active site" description="Proton acceptor; for phosphorylation activity. Proton donor; for dephosphorylation activity" evidence="1">
    <location>
        <position position="177"/>
    </location>
</feature>
<feature type="active site" evidence="1">
    <location>
        <position position="243"/>
    </location>
</feature>
<feature type="binding site" evidence="1">
    <location>
        <begin position="153"/>
        <end position="160"/>
    </location>
    <ligand>
        <name>ATP</name>
        <dbReference type="ChEBI" id="CHEBI:30616"/>
    </ligand>
</feature>
<feature type="binding site" evidence="1">
    <location>
        <position position="160"/>
    </location>
    <ligand>
        <name>Mg(2+)</name>
        <dbReference type="ChEBI" id="CHEBI:18420"/>
    </ligand>
</feature>
<feature type="binding site" evidence="1">
    <location>
        <position position="202"/>
    </location>
    <ligand>
        <name>Mg(2+)</name>
        <dbReference type="ChEBI" id="CHEBI:18420"/>
    </ligand>
</feature>
<dbReference type="EC" id="2.7.11.-" evidence="1"/>
<dbReference type="EC" id="2.7.4.-" evidence="1"/>
<dbReference type="EMBL" id="AM295007">
    <property type="protein sequence ID" value="CAM30705.1"/>
    <property type="molecule type" value="Genomic_DNA"/>
</dbReference>
<dbReference type="RefSeq" id="WP_002990580.1">
    <property type="nucleotide sequence ID" value="NC_009332.1"/>
</dbReference>
<dbReference type="SMR" id="A2RFS6"/>
<dbReference type="GeneID" id="69901202"/>
<dbReference type="KEGG" id="spf:SpyM51377"/>
<dbReference type="HOGENOM" id="CLU_052030_0_1_9"/>
<dbReference type="GO" id="GO:0005524">
    <property type="term" value="F:ATP binding"/>
    <property type="evidence" value="ECO:0007669"/>
    <property type="project" value="UniProtKB-UniRule"/>
</dbReference>
<dbReference type="GO" id="GO:0000287">
    <property type="term" value="F:magnesium ion binding"/>
    <property type="evidence" value="ECO:0007669"/>
    <property type="project" value="UniProtKB-UniRule"/>
</dbReference>
<dbReference type="GO" id="GO:0000155">
    <property type="term" value="F:phosphorelay sensor kinase activity"/>
    <property type="evidence" value="ECO:0007669"/>
    <property type="project" value="InterPro"/>
</dbReference>
<dbReference type="GO" id="GO:0004674">
    <property type="term" value="F:protein serine/threonine kinase activity"/>
    <property type="evidence" value="ECO:0007669"/>
    <property type="project" value="UniProtKB-KW"/>
</dbReference>
<dbReference type="GO" id="GO:0004712">
    <property type="term" value="F:protein serine/threonine/tyrosine kinase activity"/>
    <property type="evidence" value="ECO:0007669"/>
    <property type="project" value="UniProtKB-UniRule"/>
</dbReference>
<dbReference type="GO" id="GO:0006109">
    <property type="term" value="P:regulation of carbohydrate metabolic process"/>
    <property type="evidence" value="ECO:0007669"/>
    <property type="project" value="UniProtKB-UniRule"/>
</dbReference>
<dbReference type="CDD" id="cd01918">
    <property type="entry name" value="HprK_C"/>
    <property type="match status" value="1"/>
</dbReference>
<dbReference type="FunFam" id="3.40.50.300:FF:000174">
    <property type="entry name" value="HPr kinase/phosphorylase"/>
    <property type="match status" value="1"/>
</dbReference>
<dbReference type="Gene3D" id="3.40.1390.20">
    <property type="entry name" value="HprK N-terminal domain-like"/>
    <property type="match status" value="1"/>
</dbReference>
<dbReference type="Gene3D" id="3.40.50.300">
    <property type="entry name" value="P-loop containing nucleotide triphosphate hydrolases"/>
    <property type="match status" value="1"/>
</dbReference>
<dbReference type="HAMAP" id="MF_01249">
    <property type="entry name" value="HPr_kinase"/>
    <property type="match status" value="1"/>
</dbReference>
<dbReference type="InterPro" id="IPR003755">
    <property type="entry name" value="HPr(Ser)_kin/Pase"/>
</dbReference>
<dbReference type="InterPro" id="IPR011104">
    <property type="entry name" value="Hpr_kin/Pase_C"/>
</dbReference>
<dbReference type="InterPro" id="IPR011126">
    <property type="entry name" value="Hpr_kin/Pase_Hpr_N"/>
</dbReference>
<dbReference type="InterPro" id="IPR027417">
    <property type="entry name" value="P-loop_NTPase"/>
</dbReference>
<dbReference type="InterPro" id="IPR028979">
    <property type="entry name" value="Ser_kin/Pase_Hpr-like_N_sf"/>
</dbReference>
<dbReference type="NCBIfam" id="TIGR00679">
    <property type="entry name" value="hpr-ser"/>
    <property type="match status" value="1"/>
</dbReference>
<dbReference type="PANTHER" id="PTHR30305:SF1">
    <property type="entry name" value="HPR KINASE_PHOSPHORYLASE"/>
    <property type="match status" value="1"/>
</dbReference>
<dbReference type="PANTHER" id="PTHR30305">
    <property type="entry name" value="PROTEIN YJDM-RELATED"/>
    <property type="match status" value="1"/>
</dbReference>
<dbReference type="Pfam" id="PF07475">
    <property type="entry name" value="Hpr_kinase_C"/>
    <property type="match status" value="1"/>
</dbReference>
<dbReference type="Pfam" id="PF02603">
    <property type="entry name" value="Hpr_kinase_N"/>
    <property type="match status" value="1"/>
</dbReference>
<dbReference type="SUPFAM" id="SSF75138">
    <property type="entry name" value="HprK N-terminal domain-like"/>
    <property type="match status" value="1"/>
</dbReference>
<dbReference type="SUPFAM" id="SSF53795">
    <property type="entry name" value="PEP carboxykinase-like"/>
    <property type="match status" value="1"/>
</dbReference>
<sequence length="310" mass="34570">MTVTVKMLVQKVKLDVVYATDNLLSKEITTSDISRPGLEMTGYFDYYAPERLQLFGMKEWSYLTQMTSHNRYSVLKEMFKKDTPAVVVSRNLAIPKEMVQAAKEEGISLLSSRVSTSRLAGEMSYFLDASLAERTSVHGVLMDIYGMGVLIQGDSGIGKSETGLELVKRGHRLVADDRVDVYAKDEETLWGEPAEILRHLLEIRGVGIIDVMSLYGASAVKDSSQVQLAIYLENFEAGKVFDRLGNGNEEITFSGVRIPRIRIPVKTGRNVSVVIEAAAMNHRAKEMGFDATKTFEDRLTQLITKNEVSQ</sequence>
<reference key="1">
    <citation type="journal article" date="2007" name="J. Bacteriol.">
        <title>Complete genome of acute rheumatic fever-associated serotype M5 Streptococcus pyogenes strain Manfredo.</title>
        <authorList>
            <person name="Holden M.T.G."/>
            <person name="Scott A."/>
            <person name="Cherevach I."/>
            <person name="Chillingworth T."/>
            <person name="Churcher C."/>
            <person name="Cronin A."/>
            <person name="Dowd L."/>
            <person name="Feltwell T."/>
            <person name="Hamlin N."/>
            <person name="Holroyd S."/>
            <person name="Jagels K."/>
            <person name="Moule S."/>
            <person name="Mungall K."/>
            <person name="Quail M.A."/>
            <person name="Price C."/>
            <person name="Rabbinowitsch E."/>
            <person name="Sharp S."/>
            <person name="Skelton J."/>
            <person name="Whitehead S."/>
            <person name="Barrell B.G."/>
            <person name="Kehoe M."/>
            <person name="Parkhill J."/>
        </authorList>
    </citation>
    <scope>NUCLEOTIDE SEQUENCE [LARGE SCALE GENOMIC DNA]</scope>
    <source>
        <strain>Manfredo</strain>
    </source>
</reference>
<protein>
    <recommendedName>
        <fullName evidence="1">HPr kinase/phosphorylase</fullName>
        <shortName evidence="1">HPrK/P</shortName>
        <ecNumber evidence="1">2.7.11.-</ecNumber>
        <ecNumber evidence="1">2.7.4.-</ecNumber>
    </recommendedName>
    <alternativeName>
        <fullName evidence="1">HPr(Ser) kinase/phosphorylase</fullName>
    </alternativeName>
</protein>
<accession>A2RFS6</accession>
<proteinExistence type="inferred from homology"/>
<name>HPRK_STRPG</name>
<keyword id="KW-0067">ATP-binding</keyword>
<keyword id="KW-0119">Carbohydrate metabolism</keyword>
<keyword id="KW-0418">Kinase</keyword>
<keyword id="KW-0460">Magnesium</keyword>
<keyword id="KW-0479">Metal-binding</keyword>
<keyword id="KW-0511">Multifunctional enzyme</keyword>
<keyword id="KW-0547">Nucleotide-binding</keyword>
<keyword id="KW-0723">Serine/threonine-protein kinase</keyword>
<keyword id="KW-0808">Transferase</keyword>
<evidence type="ECO:0000255" key="1">
    <source>
        <dbReference type="HAMAP-Rule" id="MF_01249"/>
    </source>
</evidence>